<feature type="chain" id="PRO_0000222339" description="Protein P">
    <location>
        <begin position="1"/>
        <end position="838"/>
    </location>
</feature>
<feature type="domain" description="Reverse transcriptase" evidence="1">
    <location>
        <begin position="352"/>
        <end position="595"/>
    </location>
</feature>
<feature type="region of interest" description="Terminal protein domain (TP)" evidence="1">
    <location>
        <begin position="1"/>
        <end position="179"/>
    </location>
</feature>
<feature type="region of interest" description="Spacer" evidence="1">
    <location>
        <begin position="180"/>
        <end position="341"/>
    </location>
</feature>
<feature type="region of interest" description="Disordered" evidence="2">
    <location>
        <begin position="219"/>
        <end position="245"/>
    </location>
</feature>
<feature type="region of interest" description="Polymerase/reverse transcriptase domain (RT)" evidence="1">
    <location>
        <begin position="342"/>
        <end position="685"/>
    </location>
</feature>
<feature type="binding site" evidence="1">
    <location>
        <position position="424"/>
    </location>
    <ligand>
        <name>Mg(2+)</name>
        <dbReference type="ChEBI" id="CHEBI:18420"/>
        <note>catalytic</note>
    </ligand>
</feature>
<feature type="binding site" evidence="1">
    <location>
        <position position="546"/>
    </location>
    <ligand>
        <name>Mg(2+)</name>
        <dbReference type="ChEBI" id="CHEBI:18420"/>
        <note>catalytic</note>
    </ligand>
</feature>
<feature type="binding site" evidence="1">
    <location>
        <position position="547"/>
    </location>
    <ligand>
        <name>Mg(2+)</name>
        <dbReference type="ChEBI" id="CHEBI:18420"/>
        <note>catalytic</note>
    </ligand>
</feature>
<feature type="site" description="Priming of reverse-transcription by covalently linking the first nucleotide of the (-)DNA" evidence="1">
    <location>
        <position position="65"/>
    </location>
</feature>
<protein>
    <recommendedName>
        <fullName evidence="1">Protein P</fullName>
    </recommendedName>
    <domain>
        <recommendedName>
            <fullName evidence="1">DNA-directed DNA polymerase</fullName>
            <ecNumber evidence="1">2.7.7.7</ecNumber>
        </recommendedName>
    </domain>
    <domain>
        <recommendedName>
            <fullName evidence="1">RNA-directed DNA polymerase</fullName>
            <ecNumber evidence="1">2.7.7.49</ecNumber>
        </recommendedName>
    </domain>
    <domain>
        <recommendedName>
            <fullName evidence="1">Ribonuclease H</fullName>
            <ecNumber evidence="1">3.1.26.4</ecNumber>
        </recommendedName>
    </domain>
</protein>
<organism>
    <name type="scientific">Hepatitis B virus genotype A2 subtype adw (isolate Japan/Nishioka/1983)</name>
    <name type="common">HBV-A</name>
    <dbReference type="NCBI Taxonomy" id="482134"/>
    <lineage>
        <taxon>Viruses</taxon>
        <taxon>Riboviria</taxon>
        <taxon>Pararnavirae</taxon>
        <taxon>Artverviricota</taxon>
        <taxon>Revtraviricetes</taxon>
        <taxon>Blubervirales</taxon>
        <taxon>Hepadnaviridae</taxon>
        <taxon>Orthohepadnavirus</taxon>
        <taxon>Hepatitis B virus</taxon>
    </lineage>
</organism>
<name>DPOL_HBVA2</name>
<sequence length="838" mass="93840">MPLSYQHFRKLLLLDDGTEAGPLEEELPRLADADLNRRVAEDLNLGNLNVSIPWTHKVGNFTGLYSSTVPIFNPEWQTPSFPKIHLQEDIINRCQQFVGPLTVNEKRRLKLIMPARFYPTHTKYLPLDKGIKPYYPDQVVNHYFQTRHYLHTLWKAGILYKRETTRSASFCGSPYSWEQELQHSQRHGDESFCSQPSGIPSRSSVGPCIRSQLNKSRLGLQPHQGPLASSQPGRSGSIRARAHPSTRRYFGVEPSGSGHIDHSVNNSSSCLHQSAVRKAAYSHLSTSKRQSSSGHAVEFHCLAPSSAGSQSQGSVSSCWWLQFRNSKPCSEYCLSHLVNLREDWGPCDDHGEHHIRIPRTPARVTGGVFLVDKNPHNTAESRLVVDFSQFSRGITRVSWPKFAVPNLQSLTNLLSSNLSWLSLDVSAAFYHIPLHPAAMPHLLIGSSGLSRYVARLSSNSRINNNQYGTMQNLHDSCSRQLFVSLMLLYKTYGWKLHLYSHPIVLGFRKIPMGVGLSPFLLAQFTSAICSVVRRAFPHCLAFSYMDDVVLGAKSVQHRESLYTAVTNFLLSLGIHLNPNKTKRWGYSLNFMGYIIGSWGTLPQDHIVQKIKHCFRKLPVNRPIDWKVCQRIVGLLGFAAPFTQCGYPALMPLYACIQAKQAFTFSPTYKAFLSKQYMNLYPVARQRPGLCQVFADATPTGWGLAIGHQRMRGTFVAPLPIHTAELLAACFARSRSGAKLIGTDNSVVLSRKYTSFPWLLGCTANWILRGTSFVYVPSALNPADDPSRGRLGLSRPLLRLPFQPTTGRTSLYAVSPSVPSHLPVRVHFASPLHVAWRPP</sequence>
<organismHost>
    <name type="scientific">Homo sapiens</name>
    <name type="common">Human</name>
    <dbReference type="NCBI Taxonomy" id="9606"/>
</organismHost>
<organismHost>
    <name type="scientific">Pan troglodytes</name>
    <name type="common">Chimpanzee</name>
    <dbReference type="NCBI Taxonomy" id="9598"/>
</organismHost>
<reference key="1">
    <citation type="journal article" date="1983" name="Nucleic Acids Res.">
        <title>The complete nucleotide sequences of the cloned hepatitis B virus DNA; subtype adr and adw.</title>
        <authorList>
            <person name="Ono Y."/>
            <person name="Onda H."/>
            <person name="Sasada R."/>
            <person name="Igarashi K."/>
            <person name="Sugino Y."/>
            <person name="Nishioka K."/>
        </authorList>
    </citation>
    <scope>NUCLEOTIDE SEQUENCE [GENOMIC DNA]</scope>
</reference>
<reference key="2">
    <citation type="journal article" date="2007" name="World J. Gastroenterol.">
        <title>Hepatitis B virus replication.</title>
        <authorList>
            <person name="Beck J."/>
            <person name="Nassal M."/>
        </authorList>
    </citation>
    <scope>REVIEW</scope>
</reference>
<proteinExistence type="inferred from homology"/>
<keyword id="KW-0235">DNA replication</keyword>
<keyword id="KW-0238">DNA-binding</keyword>
<keyword id="KW-0239">DNA-directed DNA polymerase</keyword>
<keyword id="KW-0255">Endonuclease</keyword>
<keyword id="KW-0945">Host-virus interaction</keyword>
<keyword id="KW-0378">Hydrolase</keyword>
<keyword id="KW-1090">Inhibition of host innate immune response by virus</keyword>
<keyword id="KW-1113">Inhibition of host RLR pathway by virus</keyword>
<keyword id="KW-0460">Magnesium</keyword>
<keyword id="KW-0479">Metal-binding</keyword>
<keyword id="KW-0511">Multifunctional enzyme</keyword>
<keyword id="KW-0540">Nuclease</keyword>
<keyword id="KW-0548">Nucleotidyltransferase</keyword>
<keyword id="KW-0695">RNA-directed DNA polymerase</keyword>
<keyword id="KW-0808">Transferase</keyword>
<keyword id="KW-0899">Viral immunoevasion</keyword>
<comment type="function">
    <text evidence="1">Multifunctional enzyme that converts the viral RNA genome into dsDNA in viral cytoplasmic capsids. This enzyme displays a DNA polymerase activity that can copy either DNA or RNA templates, and a ribonuclease H (RNase H) activity that cleaves the RNA strand of RNA-DNA heteroduplexes in a partially processive 3'- to 5'-endonucleasic mode. Neo-synthesized pregenomic RNA (pgRNA) are encapsidated together with the P protein, and reverse-transcribed inside the nucleocapsid. Initiation of reverse-transcription occurs first by binding the epsilon loop on the pgRNA genome, and is initiated by protein priming, thereby the 5'-end of (-)DNA is covalently linked to P protein. Partial (+)DNA is synthesized from the (-)DNA template and generates the relaxed circular DNA (RC-DNA) genome. After budding and infection, the RC-DNA migrates in the nucleus, and is converted into a plasmid-like covalently closed circular DNA (cccDNA). The activity of P protein does not seem to be necessary for cccDNA generation, and is presumably released from (+)DNA by host nuclear DNA repair machinery.</text>
</comment>
<comment type="catalytic activity">
    <reaction evidence="1">
        <text>DNA(n) + a 2'-deoxyribonucleoside 5'-triphosphate = DNA(n+1) + diphosphate</text>
        <dbReference type="Rhea" id="RHEA:22508"/>
        <dbReference type="Rhea" id="RHEA-COMP:17339"/>
        <dbReference type="Rhea" id="RHEA-COMP:17340"/>
        <dbReference type="ChEBI" id="CHEBI:33019"/>
        <dbReference type="ChEBI" id="CHEBI:61560"/>
        <dbReference type="ChEBI" id="CHEBI:173112"/>
        <dbReference type="EC" id="2.7.7.7"/>
    </reaction>
</comment>
<comment type="catalytic activity">
    <reaction evidence="1">
        <text>DNA(n) + a 2'-deoxyribonucleoside 5'-triphosphate = DNA(n+1) + diphosphate</text>
        <dbReference type="Rhea" id="RHEA:22508"/>
        <dbReference type="Rhea" id="RHEA-COMP:17339"/>
        <dbReference type="Rhea" id="RHEA-COMP:17340"/>
        <dbReference type="ChEBI" id="CHEBI:33019"/>
        <dbReference type="ChEBI" id="CHEBI:61560"/>
        <dbReference type="ChEBI" id="CHEBI:173112"/>
        <dbReference type="EC" id="2.7.7.49"/>
    </reaction>
</comment>
<comment type="catalytic activity">
    <reaction evidence="1">
        <text>Endonucleolytic cleavage to 5'-phosphomonoester.</text>
        <dbReference type="EC" id="3.1.26.4"/>
    </reaction>
</comment>
<comment type="activity regulation">
    <text evidence="1">Activated by host HSP70 and HSP40 in vitro to be able to bind the epsilon loop of the pgRNA. Because deletion of the RNase H region renders the protein partly chaperone-independent, the chaperones may be needed indirectly to relieve occlusion of the RNA-binding site by this domain. Inhibited by several reverse-transcriptase inhibitors: Lamivudine, Adefovir and Entecavir.</text>
</comment>
<comment type="domain">
    <text evidence="1">Terminal protein domain (TP) is hepadnavirus-specific. Spacer domain is highly variable and separates the TP and RT domains. Polymerase/reverse-transcriptase domain (RT) and ribonuclease H domain (RH) are similar to retrovirus reverse transcriptase/RNase H.</text>
</comment>
<comment type="domain">
    <text evidence="1">The polymerase/reverse transcriptase (RT) and ribonuclease H (RH) domains are structured in five subdomains: finger, palm, thumb, connection and RNase H. Within the palm subdomain, the 'primer grip' region is thought to be involved in the positioning of the primer terminus for accommodating the incoming nucleotide. The RH domain stabilizes the association of RT with primer-template.</text>
</comment>
<comment type="miscellaneous">
    <text evidence="1">Hepadnaviral virions contain probably just one P protein molecule per particle.</text>
</comment>
<comment type="similarity">
    <text evidence="1">Belongs to the hepadnaviridae P protein family.</text>
</comment>
<accession>P03158</accession>
<gene>
    <name evidence="1" type="primary">P</name>
</gene>
<dbReference type="EC" id="2.7.7.7" evidence="1"/>
<dbReference type="EC" id="2.7.7.49" evidence="1"/>
<dbReference type="EC" id="3.1.26.4" evidence="1"/>
<dbReference type="EMBL" id="V00866">
    <property type="status" value="NOT_ANNOTATED_CDS"/>
    <property type="molecule type" value="Genomic_DNA"/>
</dbReference>
<dbReference type="Proteomes" id="UP000007906">
    <property type="component" value="Genome"/>
</dbReference>
<dbReference type="GO" id="GO:0003677">
    <property type="term" value="F:DNA binding"/>
    <property type="evidence" value="ECO:0007669"/>
    <property type="project" value="UniProtKB-UniRule"/>
</dbReference>
<dbReference type="GO" id="GO:0003887">
    <property type="term" value="F:DNA-directed DNA polymerase activity"/>
    <property type="evidence" value="ECO:0007669"/>
    <property type="project" value="UniProtKB-UniRule"/>
</dbReference>
<dbReference type="GO" id="GO:0046872">
    <property type="term" value="F:metal ion binding"/>
    <property type="evidence" value="ECO:0007669"/>
    <property type="project" value="UniProtKB-UniRule"/>
</dbReference>
<dbReference type="GO" id="GO:0003964">
    <property type="term" value="F:RNA-directed DNA polymerase activity"/>
    <property type="evidence" value="ECO:0007669"/>
    <property type="project" value="UniProtKB-UniRule"/>
</dbReference>
<dbReference type="GO" id="GO:0004523">
    <property type="term" value="F:RNA-DNA hybrid ribonuclease activity"/>
    <property type="evidence" value="ECO:0007669"/>
    <property type="project" value="UniProtKB-UniRule"/>
</dbReference>
<dbReference type="GO" id="GO:0006260">
    <property type="term" value="P:DNA replication"/>
    <property type="evidence" value="ECO:0007669"/>
    <property type="project" value="UniProtKB-UniRule"/>
</dbReference>
<dbReference type="GO" id="GO:0052170">
    <property type="term" value="P:symbiont-mediated suppression of host innate immune response"/>
    <property type="evidence" value="ECO:0007669"/>
    <property type="project" value="UniProtKB-UniRule"/>
</dbReference>
<dbReference type="FunFam" id="3.30.70.270:FF:000009">
    <property type="entry name" value="Protein P"/>
    <property type="match status" value="1"/>
</dbReference>
<dbReference type="Gene3D" id="3.30.70.270">
    <property type="match status" value="1"/>
</dbReference>
<dbReference type="HAMAP" id="MF_04073">
    <property type="entry name" value="HBV_DPOL"/>
    <property type="match status" value="1"/>
</dbReference>
<dbReference type="InterPro" id="IPR043502">
    <property type="entry name" value="DNA/RNA_pol_sf"/>
</dbReference>
<dbReference type="InterPro" id="IPR001462">
    <property type="entry name" value="DNApol_viral_C"/>
</dbReference>
<dbReference type="InterPro" id="IPR000201">
    <property type="entry name" value="DNApol_viral_N"/>
</dbReference>
<dbReference type="InterPro" id="IPR037531">
    <property type="entry name" value="HBV_DPOL"/>
</dbReference>
<dbReference type="InterPro" id="IPR043128">
    <property type="entry name" value="Rev_trsase/Diguanyl_cyclase"/>
</dbReference>
<dbReference type="InterPro" id="IPR000477">
    <property type="entry name" value="RT_dom"/>
</dbReference>
<dbReference type="InterPro" id="IPR051320">
    <property type="entry name" value="Viral_Replic_Matur_Polypro"/>
</dbReference>
<dbReference type="PANTHER" id="PTHR33064:SF29">
    <property type="entry name" value="PEPTIDASE A2 DOMAIN-CONTAINING PROTEIN-RELATED"/>
    <property type="match status" value="1"/>
</dbReference>
<dbReference type="PANTHER" id="PTHR33064">
    <property type="entry name" value="POL PROTEIN"/>
    <property type="match status" value="1"/>
</dbReference>
<dbReference type="Pfam" id="PF00336">
    <property type="entry name" value="DNA_pol_viral_C"/>
    <property type="match status" value="1"/>
</dbReference>
<dbReference type="Pfam" id="PF00242">
    <property type="entry name" value="DNA_pol_viral_N"/>
    <property type="match status" value="1"/>
</dbReference>
<dbReference type="Pfam" id="PF00078">
    <property type="entry name" value="RVT_1"/>
    <property type="match status" value="1"/>
</dbReference>
<dbReference type="SUPFAM" id="SSF56672">
    <property type="entry name" value="DNA/RNA polymerases"/>
    <property type="match status" value="1"/>
</dbReference>
<dbReference type="PROSITE" id="PS50878">
    <property type="entry name" value="RT_POL"/>
    <property type="match status" value="1"/>
</dbReference>
<evidence type="ECO:0000255" key="1">
    <source>
        <dbReference type="HAMAP-Rule" id="MF_04073"/>
    </source>
</evidence>
<evidence type="ECO:0000256" key="2">
    <source>
        <dbReference type="SAM" id="MobiDB-lite"/>
    </source>
</evidence>